<organism>
    <name type="scientific">Klebsiella pneumoniae (strain 342)</name>
    <dbReference type="NCBI Taxonomy" id="507522"/>
    <lineage>
        <taxon>Bacteria</taxon>
        <taxon>Pseudomonadati</taxon>
        <taxon>Pseudomonadota</taxon>
        <taxon>Gammaproteobacteria</taxon>
        <taxon>Enterobacterales</taxon>
        <taxon>Enterobacteriaceae</taxon>
        <taxon>Klebsiella/Raoultella group</taxon>
        <taxon>Klebsiella</taxon>
        <taxon>Klebsiella pneumoniae complex</taxon>
    </lineage>
</organism>
<proteinExistence type="inferred from homology"/>
<accession>B5XQ39</accession>
<evidence type="ECO:0000255" key="1">
    <source>
        <dbReference type="HAMAP-Rule" id="MF_00749"/>
    </source>
</evidence>
<evidence type="ECO:0000256" key="2">
    <source>
        <dbReference type="SAM" id="MobiDB-lite"/>
    </source>
</evidence>
<keyword id="KW-0143">Chaperone</keyword>
<keyword id="KW-0963">Cytoplasm</keyword>
<keyword id="KW-0694">RNA-binding</keyword>
<comment type="function">
    <text evidence="1">RNA chaperone with significant RNA binding, RNA strand exchange and RNA duplexing activities. May regulate ProP activity through an RNA-based, post-transcriptional mechanism.</text>
</comment>
<comment type="subcellular location">
    <subcellularLocation>
        <location evidence="1">Cytoplasm</location>
    </subcellularLocation>
</comment>
<comment type="similarity">
    <text evidence="1">Belongs to the ProQ family.</text>
</comment>
<dbReference type="EMBL" id="CP000964">
    <property type="protein sequence ID" value="ACI08393.1"/>
    <property type="molecule type" value="Genomic_DNA"/>
</dbReference>
<dbReference type="SMR" id="B5XQ39"/>
<dbReference type="KEGG" id="kpe:KPK_1943"/>
<dbReference type="HOGENOM" id="CLU_113254_0_0_6"/>
<dbReference type="Proteomes" id="UP000001734">
    <property type="component" value="Chromosome"/>
</dbReference>
<dbReference type="GO" id="GO:0005829">
    <property type="term" value="C:cytosol"/>
    <property type="evidence" value="ECO:0007669"/>
    <property type="project" value="TreeGrafter"/>
</dbReference>
<dbReference type="GO" id="GO:0033592">
    <property type="term" value="F:RNA strand annealing activity"/>
    <property type="evidence" value="ECO:0007669"/>
    <property type="project" value="UniProtKB-UniRule"/>
</dbReference>
<dbReference type="GO" id="GO:0034057">
    <property type="term" value="F:RNA strand-exchange activity"/>
    <property type="evidence" value="ECO:0007669"/>
    <property type="project" value="UniProtKB-UniRule"/>
</dbReference>
<dbReference type="GO" id="GO:0010608">
    <property type="term" value="P:post-transcriptional regulation of gene expression"/>
    <property type="evidence" value="ECO:0007669"/>
    <property type="project" value="InterPro"/>
</dbReference>
<dbReference type="FunFam" id="1.10.1710.10:FF:000001">
    <property type="entry name" value="RNA chaperone ProQ"/>
    <property type="match status" value="1"/>
</dbReference>
<dbReference type="Gene3D" id="1.10.1710.10">
    <property type="entry name" value="ProQ/FinO domain"/>
    <property type="match status" value="1"/>
</dbReference>
<dbReference type="HAMAP" id="MF_00749">
    <property type="entry name" value="ProQ"/>
    <property type="match status" value="1"/>
</dbReference>
<dbReference type="InterPro" id="IPR023529">
    <property type="entry name" value="ProQ"/>
</dbReference>
<dbReference type="InterPro" id="IPR016103">
    <property type="entry name" value="ProQ/FinO"/>
</dbReference>
<dbReference type="InterPro" id="IPR036442">
    <property type="entry name" value="ProQ/FinO_sf"/>
</dbReference>
<dbReference type="InterPro" id="IPR035236">
    <property type="entry name" value="ProQ_C"/>
</dbReference>
<dbReference type="NCBIfam" id="NF003434">
    <property type="entry name" value="PRK04950.1"/>
    <property type="match status" value="1"/>
</dbReference>
<dbReference type="PANTHER" id="PTHR38106">
    <property type="entry name" value="RNA CHAPERONE PROQ"/>
    <property type="match status" value="1"/>
</dbReference>
<dbReference type="PANTHER" id="PTHR38106:SF1">
    <property type="entry name" value="RNA CHAPERONE PROQ"/>
    <property type="match status" value="1"/>
</dbReference>
<dbReference type="Pfam" id="PF04352">
    <property type="entry name" value="ProQ"/>
    <property type="match status" value="1"/>
</dbReference>
<dbReference type="Pfam" id="PF17516">
    <property type="entry name" value="ProQ_C"/>
    <property type="match status" value="1"/>
</dbReference>
<dbReference type="SMART" id="SM00945">
    <property type="entry name" value="ProQ"/>
    <property type="match status" value="1"/>
</dbReference>
<dbReference type="SUPFAM" id="SSF48657">
    <property type="entry name" value="FinO-like"/>
    <property type="match status" value="1"/>
</dbReference>
<sequence>MENQPKLNSSKEVIAFLAERFPQCFSAEGEARPLKIGIFQDLVERVGGEMNLSKTQLRAALRLYTSSWRYLYGVKAGAIRVDLDGNPCGELEEQHIAHARQQLEEAKARVQTQRAAQQAKKREAAAAAGQQDEGVRRERKPRPQQPRRKEGAEQRKPRPVAAKAPREERHTPVSDVSVLTVGQALKVKAGNNAMDATVLEITKDGVRVQLTSGMSMIVRAEHLVF</sequence>
<feature type="chain" id="PRO_1000133299" description="RNA chaperone ProQ">
    <location>
        <begin position="1"/>
        <end position="225"/>
    </location>
</feature>
<feature type="region of interest" description="Disordered" evidence="2">
    <location>
        <begin position="103"/>
        <end position="173"/>
    </location>
</feature>
<feature type="compositionally biased region" description="Low complexity" evidence="2">
    <location>
        <begin position="109"/>
        <end position="118"/>
    </location>
</feature>
<feature type="compositionally biased region" description="Basic residues" evidence="2">
    <location>
        <begin position="137"/>
        <end position="146"/>
    </location>
</feature>
<feature type="compositionally biased region" description="Basic and acidic residues" evidence="2">
    <location>
        <begin position="147"/>
        <end position="156"/>
    </location>
</feature>
<reference key="1">
    <citation type="journal article" date="2008" name="PLoS Genet.">
        <title>Complete genome sequence of the N2-fixing broad host range endophyte Klebsiella pneumoniae 342 and virulence predictions verified in mice.</title>
        <authorList>
            <person name="Fouts D.E."/>
            <person name="Tyler H.L."/>
            <person name="DeBoy R.T."/>
            <person name="Daugherty S."/>
            <person name="Ren Q."/>
            <person name="Badger J.H."/>
            <person name="Durkin A.S."/>
            <person name="Huot H."/>
            <person name="Shrivastava S."/>
            <person name="Kothari S."/>
            <person name="Dodson R.J."/>
            <person name="Mohamoud Y."/>
            <person name="Khouri H."/>
            <person name="Roesch L.F.W."/>
            <person name="Krogfelt K.A."/>
            <person name="Struve C."/>
            <person name="Triplett E.W."/>
            <person name="Methe B.A."/>
        </authorList>
    </citation>
    <scope>NUCLEOTIDE SEQUENCE [LARGE SCALE GENOMIC DNA]</scope>
    <source>
        <strain>342</strain>
    </source>
</reference>
<name>PROQ_KLEP3</name>
<protein>
    <recommendedName>
        <fullName evidence="1">RNA chaperone ProQ</fullName>
    </recommendedName>
</protein>
<gene>
    <name evidence="1" type="primary">proQ</name>
    <name type="ordered locus">KPK_1943</name>
</gene>